<evidence type="ECO:0000255" key="1">
    <source>
        <dbReference type="PROSITE-ProRule" id="PRU00353"/>
    </source>
</evidence>
<evidence type="ECO:0000269" key="2">
    <source>
    </source>
</evidence>
<evidence type="ECO:0000305" key="3"/>
<evidence type="ECO:0000312" key="4">
    <source>
        <dbReference type="Araport" id="AT3G03200"/>
    </source>
</evidence>
<evidence type="ECO:0000312" key="5">
    <source>
        <dbReference type="EMBL" id="AAF26106.1"/>
    </source>
</evidence>
<evidence type="ECO:0000312" key="6">
    <source>
        <dbReference type="EMBL" id="ABP88115.1"/>
    </source>
</evidence>
<evidence type="ECO:0000312" key="7">
    <source>
        <dbReference type="EMBL" id="AEE73912.1"/>
    </source>
</evidence>
<keyword id="KW-0238">DNA-binding</keyword>
<keyword id="KW-0539">Nucleus</keyword>
<keyword id="KW-1185">Reference proteome</keyword>
<keyword id="KW-0804">Transcription</keyword>
<keyword id="KW-0805">Transcription regulation</keyword>
<name>NAC45_ARATH</name>
<organism evidence="6">
    <name type="scientific">Arabidopsis thaliana</name>
    <name type="common">Mouse-ear cress</name>
    <dbReference type="NCBI Taxonomy" id="3702"/>
    <lineage>
        <taxon>Eukaryota</taxon>
        <taxon>Viridiplantae</taxon>
        <taxon>Streptophyta</taxon>
        <taxon>Embryophyta</taxon>
        <taxon>Tracheophyta</taxon>
        <taxon>Spermatophyta</taxon>
        <taxon>Magnoliopsida</taxon>
        <taxon>eudicotyledons</taxon>
        <taxon>Gunneridae</taxon>
        <taxon>Pentapetalae</taxon>
        <taxon>rosids</taxon>
        <taxon>malvids</taxon>
        <taxon>Brassicales</taxon>
        <taxon>Brassicaceae</taxon>
        <taxon>Camelineae</taxon>
        <taxon>Arabidopsis</taxon>
    </lineage>
</organism>
<sequence length="479" mass="55588">MAPVSLPPGFRFHPTDEELITYYLKRKINGLEIELEVIAEVDLYKCEPWDLPGKSLLPSKDQEWYFFSPRDRKYPNGSRTNRATKGGYWKATGKDRRVSWRDRAIGTKKTLVYYRGRAPHGIRTGWVMHEYRLDETECEPSAYGMQDAYALCRVFKKIVIEAKPRDQHRSYVHAMSNVSGNCSSSFDTCSDLEISSTTHQVQNTFQPRFGNERFNSNAISNEDWSQYYGSSYRPFPTPYKVNTEIECSMLQHNIYLPPLRVENSAFSDSDFFTSMTHNNDHGVFDDFTFAASNSNHNNSVGDQVIHVGNYDEQLITSNRHMNQTGYIKEQKIRSSLDNTDEDPGFHGNNTNDNIDIDDFLSFDIYNEDNVNQIEDNEDVNTNETLDSSGFEVVEEETRFNNQMLISTYQTTKILYHQVVPCHTLKVHVNPISHNVEERTLFIEEDKDSWLQRAEKITKTKLTLFSLMAQQYYKCLAIFF</sequence>
<proteinExistence type="evidence at transcript level"/>
<dbReference type="EMBL" id="AC012328">
    <property type="protein sequence ID" value="AAF26106.1"/>
    <property type="status" value="ALT_SEQ"/>
    <property type="molecule type" value="Genomic_DNA"/>
</dbReference>
<dbReference type="EMBL" id="CP002686">
    <property type="protein sequence ID" value="AEE73912.1"/>
    <property type="molecule type" value="Genomic_DNA"/>
</dbReference>
<dbReference type="EMBL" id="BT030461">
    <property type="protein sequence ID" value="ABP88115.1"/>
    <property type="molecule type" value="mRNA"/>
</dbReference>
<dbReference type="RefSeq" id="NP_186970.2">
    <property type="nucleotide sequence ID" value="NM_111190.3"/>
</dbReference>
<dbReference type="SMR" id="A4VCM0"/>
<dbReference type="BioGRID" id="6559">
    <property type="interactions" value="1"/>
</dbReference>
<dbReference type="FunCoup" id="A4VCM0">
    <property type="interactions" value="15"/>
</dbReference>
<dbReference type="IntAct" id="A4VCM0">
    <property type="interactions" value="1"/>
</dbReference>
<dbReference type="STRING" id="3702.A4VCM0"/>
<dbReference type="GlyGen" id="A4VCM0">
    <property type="glycosylation" value="1 site"/>
</dbReference>
<dbReference type="PaxDb" id="3702-AT3G03200.1"/>
<dbReference type="EnsemblPlants" id="AT3G03200.1">
    <property type="protein sequence ID" value="AT3G03200.1"/>
    <property type="gene ID" value="AT3G03200"/>
</dbReference>
<dbReference type="GeneID" id="821226"/>
<dbReference type="Gramene" id="AT3G03200.1">
    <property type="protein sequence ID" value="AT3G03200.1"/>
    <property type="gene ID" value="AT3G03200"/>
</dbReference>
<dbReference type="KEGG" id="ath:AT3G03200"/>
<dbReference type="Araport" id="AT3G03200"/>
<dbReference type="TAIR" id="AT3G03200">
    <property type="gene designation" value="NAC045"/>
</dbReference>
<dbReference type="eggNOG" id="ENOG502QV39">
    <property type="taxonomic scope" value="Eukaryota"/>
</dbReference>
<dbReference type="HOGENOM" id="CLU_024022_1_1_1"/>
<dbReference type="InParanoid" id="A4VCM0"/>
<dbReference type="OMA" id="HINPINQ"/>
<dbReference type="OrthoDB" id="1075804at2759"/>
<dbReference type="PhylomeDB" id="A4VCM0"/>
<dbReference type="PRO" id="PR:A4VCM0"/>
<dbReference type="Proteomes" id="UP000006548">
    <property type="component" value="Chromosome 3"/>
</dbReference>
<dbReference type="ExpressionAtlas" id="A4VCM0">
    <property type="expression patterns" value="baseline and differential"/>
</dbReference>
<dbReference type="GO" id="GO:0005634">
    <property type="term" value="C:nucleus"/>
    <property type="evidence" value="ECO:0007669"/>
    <property type="project" value="UniProtKB-SubCell"/>
</dbReference>
<dbReference type="GO" id="GO:0003700">
    <property type="term" value="F:DNA-binding transcription factor activity"/>
    <property type="evidence" value="ECO:0000250"/>
    <property type="project" value="TAIR"/>
</dbReference>
<dbReference type="GO" id="GO:0000976">
    <property type="term" value="F:transcription cis-regulatory region binding"/>
    <property type="evidence" value="ECO:0000353"/>
    <property type="project" value="TAIR"/>
</dbReference>
<dbReference type="GO" id="GO:0090603">
    <property type="term" value="P:sieve element differentiation"/>
    <property type="evidence" value="ECO:0000315"/>
    <property type="project" value="TAIR"/>
</dbReference>
<dbReference type="GO" id="GO:0090602">
    <property type="term" value="P:sieve element enucleation"/>
    <property type="evidence" value="ECO:0000315"/>
    <property type="project" value="TAIR"/>
</dbReference>
<dbReference type="FunFam" id="2.170.150.80:FF:000002">
    <property type="entry name" value="Nac domain-containing protein 86"/>
    <property type="match status" value="1"/>
</dbReference>
<dbReference type="Gene3D" id="2.170.150.80">
    <property type="entry name" value="NAC domain"/>
    <property type="match status" value="1"/>
</dbReference>
<dbReference type="InterPro" id="IPR003441">
    <property type="entry name" value="NAC-dom"/>
</dbReference>
<dbReference type="InterPro" id="IPR036093">
    <property type="entry name" value="NAC_dom_sf"/>
</dbReference>
<dbReference type="PANTHER" id="PTHR31744:SF210">
    <property type="entry name" value="NAC DOMAIN-CONTAINING PROTEIN 86-LIKE"/>
    <property type="match status" value="1"/>
</dbReference>
<dbReference type="PANTHER" id="PTHR31744">
    <property type="entry name" value="PROTEIN CUP-SHAPED COTYLEDON 2-RELATED"/>
    <property type="match status" value="1"/>
</dbReference>
<dbReference type="Pfam" id="PF02365">
    <property type="entry name" value="NAM"/>
    <property type="match status" value="1"/>
</dbReference>
<dbReference type="SUPFAM" id="SSF101941">
    <property type="entry name" value="NAC domain"/>
    <property type="match status" value="1"/>
</dbReference>
<dbReference type="PROSITE" id="PS51005">
    <property type="entry name" value="NAC"/>
    <property type="match status" value="1"/>
</dbReference>
<accession>A4VCM0</accession>
<accession>Q9M9N8</accession>
<comment type="function">
    <text evidence="2">Transcription factor directing sieve element enucleation and cytosol degradation. Not required for formation of lytic vacuoles. Regulates, with NAC086, the transcription of NEN1, NEN2, NEN3, NEN4, RTM1, RTM2, UBP16, PLDZETA, ABCB10 and At1g26450.</text>
</comment>
<comment type="subcellular location">
    <subcellularLocation>
        <location evidence="1">Nucleus</location>
    </subcellularLocation>
</comment>
<comment type="tissue specificity">
    <text evidence="2">Expressed in a few sieve element cells before enucleation and in phloem-pole pericycle cells.</text>
</comment>
<comment type="induction">
    <text evidence="2">Regulated by the transcription factor APL (AC Q9SAK5).</text>
</comment>
<comment type="domain">
    <text evidence="1">The NAC domain includes a DNA binding domain and a dimerization domain.</text>
</comment>
<comment type="disruption phenotype">
    <text evidence="2">No visible phenotype, due to the redundancy with NAC086 (AC Q9FFI5). Nac045 and nac086 double mutants exhibit seedling lethality with defective development of the protophloem sieve element.</text>
</comment>
<comment type="sequence caution" evidence="3">
    <conflict type="erroneous gene model prediction">
        <sequence resource="EMBL-CDS" id="AAF26106"/>
    </conflict>
</comment>
<reference key="1">
    <citation type="journal article" date="2000" name="Nature">
        <title>Sequence and analysis of chromosome 3 of the plant Arabidopsis thaliana.</title>
        <authorList>
            <person name="Salanoubat M."/>
            <person name="Lemcke K."/>
            <person name="Rieger M."/>
            <person name="Ansorge W."/>
            <person name="Unseld M."/>
            <person name="Fartmann B."/>
            <person name="Valle G."/>
            <person name="Bloecker H."/>
            <person name="Perez-Alonso M."/>
            <person name="Obermaier B."/>
            <person name="Delseny M."/>
            <person name="Boutry M."/>
            <person name="Grivell L.A."/>
            <person name="Mache R."/>
            <person name="Puigdomenech P."/>
            <person name="De Simone V."/>
            <person name="Choisne N."/>
            <person name="Artiguenave F."/>
            <person name="Robert C."/>
            <person name="Brottier P."/>
            <person name="Wincker P."/>
            <person name="Cattolico L."/>
            <person name="Weissenbach J."/>
            <person name="Saurin W."/>
            <person name="Quetier F."/>
            <person name="Schaefer M."/>
            <person name="Mueller-Auer S."/>
            <person name="Gabel C."/>
            <person name="Fuchs M."/>
            <person name="Benes V."/>
            <person name="Wurmbach E."/>
            <person name="Drzonek H."/>
            <person name="Erfle H."/>
            <person name="Jordan N."/>
            <person name="Bangert S."/>
            <person name="Wiedelmann R."/>
            <person name="Kranz H."/>
            <person name="Voss H."/>
            <person name="Holland R."/>
            <person name="Brandt P."/>
            <person name="Nyakatura G."/>
            <person name="Vezzi A."/>
            <person name="D'Angelo M."/>
            <person name="Pallavicini A."/>
            <person name="Toppo S."/>
            <person name="Simionati B."/>
            <person name="Conrad A."/>
            <person name="Hornischer K."/>
            <person name="Kauer G."/>
            <person name="Loehnert T.-H."/>
            <person name="Nordsiek G."/>
            <person name="Reichelt J."/>
            <person name="Scharfe M."/>
            <person name="Schoen O."/>
            <person name="Bargues M."/>
            <person name="Terol J."/>
            <person name="Climent J."/>
            <person name="Navarro P."/>
            <person name="Collado C."/>
            <person name="Perez-Perez A."/>
            <person name="Ottenwaelder B."/>
            <person name="Duchemin D."/>
            <person name="Cooke R."/>
            <person name="Laudie M."/>
            <person name="Berger-Llauro C."/>
            <person name="Purnelle B."/>
            <person name="Masuy D."/>
            <person name="de Haan M."/>
            <person name="Maarse A.C."/>
            <person name="Alcaraz J.-P."/>
            <person name="Cottet A."/>
            <person name="Casacuberta E."/>
            <person name="Monfort A."/>
            <person name="Argiriou A."/>
            <person name="Flores M."/>
            <person name="Liguori R."/>
            <person name="Vitale D."/>
            <person name="Mannhaupt G."/>
            <person name="Haase D."/>
            <person name="Schoof H."/>
            <person name="Rudd S."/>
            <person name="Zaccaria P."/>
            <person name="Mewes H.-W."/>
            <person name="Mayer K.F.X."/>
            <person name="Kaul S."/>
            <person name="Town C.D."/>
            <person name="Koo H.L."/>
            <person name="Tallon L.J."/>
            <person name="Jenkins J."/>
            <person name="Rooney T."/>
            <person name="Rizzo M."/>
            <person name="Walts A."/>
            <person name="Utterback T."/>
            <person name="Fujii C.Y."/>
            <person name="Shea T.P."/>
            <person name="Creasy T.H."/>
            <person name="Haas B."/>
            <person name="Maiti R."/>
            <person name="Wu D."/>
            <person name="Peterson J."/>
            <person name="Van Aken S."/>
            <person name="Pai G."/>
            <person name="Militscher J."/>
            <person name="Sellers P."/>
            <person name="Gill J.E."/>
            <person name="Feldblyum T.V."/>
            <person name="Preuss D."/>
            <person name="Lin X."/>
            <person name="Nierman W.C."/>
            <person name="Salzberg S.L."/>
            <person name="White O."/>
            <person name="Venter J.C."/>
            <person name="Fraser C.M."/>
            <person name="Kaneko T."/>
            <person name="Nakamura Y."/>
            <person name="Sato S."/>
            <person name="Kato T."/>
            <person name="Asamizu E."/>
            <person name="Sasamoto S."/>
            <person name="Kimura T."/>
            <person name="Idesawa K."/>
            <person name="Kawashima K."/>
            <person name="Kishida Y."/>
            <person name="Kiyokawa C."/>
            <person name="Kohara M."/>
            <person name="Matsumoto M."/>
            <person name="Matsuno A."/>
            <person name="Muraki A."/>
            <person name="Nakayama S."/>
            <person name="Nakazaki N."/>
            <person name="Shinpo S."/>
            <person name="Takeuchi C."/>
            <person name="Wada T."/>
            <person name="Watanabe A."/>
            <person name="Yamada M."/>
            <person name="Yasuda M."/>
            <person name="Tabata S."/>
        </authorList>
    </citation>
    <scope>NUCLEOTIDE SEQUENCE [LARGE SCALE GENOMIC DNA]</scope>
    <source>
        <strain>cv. Columbia</strain>
    </source>
</reference>
<reference key="2">
    <citation type="journal article" date="2017" name="Plant J.">
        <title>Araport11: a complete reannotation of the Arabidopsis thaliana reference genome.</title>
        <authorList>
            <person name="Cheng C.Y."/>
            <person name="Krishnakumar V."/>
            <person name="Chan A.P."/>
            <person name="Thibaud-Nissen F."/>
            <person name="Schobel S."/>
            <person name="Town C.D."/>
        </authorList>
    </citation>
    <scope>GENOME REANNOTATION</scope>
    <source>
        <strain>cv. Columbia</strain>
    </source>
</reference>
<reference key="3">
    <citation type="submission" date="2007-04" db="EMBL/GenBank/DDBJ databases">
        <title>Arabidopsis ORF clones.</title>
        <authorList>
            <person name="Bautista-Mercan V.R."/>
            <person name="Kim C.J."/>
            <person name="Chen H."/>
            <person name="Wu S.Y."/>
            <person name="De Los Reyes C."/>
            <person name="Ecker J.R."/>
        </authorList>
    </citation>
    <scope>NUCLEOTIDE SEQUENCE [LARGE SCALE MRNA]</scope>
</reference>
<reference key="4">
    <citation type="journal article" date="2014" name="Science">
        <title>Plant development. Arabidopsis NAC45/86 direct sieve element morphogenesis culminating in enucleation.</title>
        <authorList>
            <person name="Furuta K.M."/>
            <person name="Yadav S.R."/>
            <person name="Lehesranta S."/>
            <person name="Belevich I."/>
            <person name="Miyashima S."/>
            <person name="Heo J.O."/>
            <person name="Vaten A."/>
            <person name="Lindgren O."/>
            <person name="De Rybel B."/>
            <person name="Van Isterdael G."/>
            <person name="Somervuo P."/>
            <person name="Lichtenberger R."/>
            <person name="Rocha R."/>
            <person name="Thitamadee S."/>
            <person name="Taehtiharju S."/>
            <person name="Auvinen P."/>
            <person name="Beeckman T."/>
            <person name="Jokitalo E."/>
            <person name="Helariutta Y."/>
        </authorList>
    </citation>
    <scope>FUNCTION</scope>
    <scope>TISSUE SPECIFICITY</scope>
    <scope>INDUCTION BY APL</scope>
    <scope>DISRUPTION PHENOTYPE</scope>
</reference>
<protein>
    <recommendedName>
        <fullName evidence="7">NAC domain-containing protein 45</fullName>
    </recommendedName>
</protein>
<gene>
    <name evidence="7" type="primary">NAC045</name>
    <name evidence="4" type="ordered locus">At3g03200</name>
    <name evidence="5" type="ORF">T17B22.11</name>
</gene>
<feature type="chain" id="PRO_0000430885" description="NAC domain-containing protein 45">
    <location>
        <begin position="1"/>
        <end position="479"/>
    </location>
</feature>
<feature type="domain" description="NAC" evidence="1">
    <location>
        <begin position="6"/>
        <end position="157"/>
    </location>
</feature>
<feature type="DNA-binding region" evidence="1">
    <location>
        <begin position="105"/>
        <end position="163"/>
    </location>
</feature>